<reference key="1">
    <citation type="submission" date="2007-05" db="EMBL/GenBank/DDBJ databases">
        <title>Complete sequence of Thermotoga petrophila RKU-1.</title>
        <authorList>
            <consortium name="US DOE Joint Genome Institute"/>
            <person name="Copeland A."/>
            <person name="Lucas S."/>
            <person name="Lapidus A."/>
            <person name="Barry K."/>
            <person name="Glavina del Rio T."/>
            <person name="Dalin E."/>
            <person name="Tice H."/>
            <person name="Pitluck S."/>
            <person name="Sims D."/>
            <person name="Brettin T."/>
            <person name="Bruce D."/>
            <person name="Detter J.C."/>
            <person name="Han C."/>
            <person name="Tapia R."/>
            <person name="Schmutz J."/>
            <person name="Larimer F."/>
            <person name="Land M."/>
            <person name="Hauser L."/>
            <person name="Kyrpides N."/>
            <person name="Mikhailova N."/>
            <person name="Nelson K."/>
            <person name="Gogarten J.P."/>
            <person name="Noll K."/>
            <person name="Richardson P."/>
        </authorList>
    </citation>
    <scope>NUCLEOTIDE SEQUENCE [LARGE SCALE GENOMIC DNA]</scope>
    <source>
        <strain>ATCC BAA-488 / DSM 13995 / JCM 10881 / RKU-1</strain>
    </source>
</reference>
<keyword id="KW-0413">Isomerase</keyword>
<keyword id="KW-0819">tRNA processing</keyword>
<sequence>MKRVAAVIEYDGSNFFGYQGQPDVRTVQGVIEDALERIFKQRIYIQAAGRTDTGVHANGQLIAFNCPNDRMTTEDIRNAMNANLPDDVYVKEVFEVPVNFHPRFDVTKRIYHYFILTSRQKNVFLRKYVWWFPYELDLDAMRKAVKYLEGTHDFTSFKTGSDERDPVRTIYRIRILRLKNDLVLIRVEGRSFLRRMVRNIVAALVKVGLKQWEPEKMKEVLEARDRSAAAGTAPAHGLYFYKVLF</sequence>
<proteinExistence type="inferred from homology"/>
<accession>A5IM09</accession>
<protein>
    <recommendedName>
        <fullName evidence="1">tRNA pseudouridine synthase A</fullName>
        <ecNumber evidence="1">5.4.99.12</ecNumber>
    </recommendedName>
    <alternativeName>
        <fullName evidence="1">tRNA pseudouridine(38-40) synthase</fullName>
    </alternativeName>
    <alternativeName>
        <fullName evidence="1">tRNA pseudouridylate synthase I</fullName>
    </alternativeName>
    <alternativeName>
        <fullName evidence="1">tRNA-uridine isomerase I</fullName>
    </alternativeName>
</protein>
<organism>
    <name type="scientific">Thermotoga petrophila (strain ATCC BAA-488 / DSM 13995 / JCM 10881 / RKU-1)</name>
    <dbReference type="NCBI Taxonomy" id="390874"/>
    <lineage>
        <taxon>Bacteria</taxon>
        <taxon>Thermotogati</taxon>
        <taxon>Thermotogota</taxon>
        <taxon>Thermotogae</taxon>
        <taxon>Thermotogales</taxon>
        <taxon>Thermotogaceae</taxon>
        <taxon>Thermotoga</taxon>
    </lineage>
</organism>
<evidence type="ECO:0000255" key="1">
    <source>
        <dbReference type="HAMAP-Rule" id="MF_00171"/>
    </source>
</evidence>
<name>TRUA_THEP1</name>
<feature type="chain" id="PRO_1000017206" description="tRNA pseudouridine synthase A">
    <location>
        <begin position="1"/>
        <end position="245"/>
    </location>
</feature>
<feature type="active site" description="Nucleophile" evidence="1">
    <location>
        <position position="52"/>
    </location>
</feature>
<feature type="binding site" evidence="1">
    <location>
        <position position="111"/>
    </location>
    <ligand>
        <name>substrate</name>
    </ligand>
</feature>
<comment type="function">
    <text evidence="1">Formation of pseudouridine at positions 38, 39 and 40 in the anticodon stem and loop of transfer RNAs.</text>
</comment>
<comment type="catalytic activity">
    <reaction evidence="1">
        <text>uridine(38/39/40) in tRNA = pseudouridine(38/39/40) in tRNA</text>
        <dbReference type="Rhea" id="RHEA:22376"/>
        <dbReference type="Rhea" id="RHEA-COMP:10085"/>
        <dbReference type="Rhea" id="RHEA-COMP:10087"/>
        <dbReference type="ChEBI" id="CHEBI:65314"/>
        <dbReference type="ChEBI" id="CHEBI:65315"/>
        <dbReference type="EC" id="5.4.99.12"/>
    </reaction>
</comment>
<comment type="subunit">
    <text evidence="1">Homodimer.</text>
</comment>
<comment type="similarity">
    <text evidence="1">Belongs to the tRNA pseudouridine synthase TruA family.</text>
</comment>
<dbReference type="EC" id="5.4.99.12" evidence="1"/>
<dbReference type="EMBL" id="CP000702">
    <property type="protein sequence ID" value="ABQ47232.1"/>
    <property type="molecule type" value="Genomic_DNA"/>
</dbReference>
<dbReference type="RefSeq" id="WP_011943731.1">
    <property type="nucleotide sequence ID" value="NC_009486.1"/>
</dbReference>
<dbReference type="SMR" id="A5IM09"/>
<dbReference type="STRING" id="390874.Tpet_1218"/>
<dbReference type="KEGG" id="tpt:Tpet_1218"/>
<dbReference type="eggNOG" id="COG0101">
    <property type="taxonomic scope" value="Bacteria"/>
</dbReference>
<dbReference type="HOGENOM" id="CLU_014673_0_1_0"/>
<dbReference type="Proteomes" id="UP000006558">
    <property type="component" value="Chromosome"/>
</dbReference>
<dbReference type="GO" id="GO:0003723">
    <property type="term" value="F:RNA binding"/>
    <property type="evidence" value="ECO:0007669"/>
    <property type="project" value="InterPro"/>
</dbReference>
<dbReference type="GO" id="GO:0160147">
    <property type="term" value="F:tRNA pseudouridine(38-40) synthase activity"/>
    <property type="evidence" value="ECO:0007669"/>
    <property type="project" value="UniProtKB-EC"/>
</dbReference>
<dbReference type="GO" id="GO:0031119">
    <property type="term" value="P:tRNA pseudouridine synthesis"/>
    <property type="evidence" value="ECO:0007669"/>
    <property type="project" value="UniProtKB-UniRule"/>
</dbReference>
<dbReference type="CDD" id="cd02570">
    <property type="entry name" value="PseudoU_synth_EcTruA"/>
    <property type="match status" value="1"/>
</dbReference>
<dbReference type="FunFam" id="3.30.70.580:FF:000001">
    <property type="entry name" value="tRNA pseudouridine synthase A"/>
    <property type="match status" value="1"/>
</dbReference>
<dbReference type="FunFam" id="3.30.70.660:FF:000026">
    <property type="entry name" value="tRNA pseudouridine synthase A"/>
    <property type="match status" value="1"/>
</dbReference>
<dbReference type="Gene3D" id="3.30.70.660">
    <property type="entry name" value="Pseudouridine synthase I, catalytic domain, C-terminal subdomain"/>
    <property type="match status" value="1"/>
</dbReference>
<dbReference type="Gene3D" id="3.30.70.580">
    <property type="entry name" value="Pseudouridine synthase I, catalytic domain, N-terminal subdomain"/>
    <property type="match status" value="1"/>
</dbReference>
<dbReference type="HAMAP" id="MF_00171">
    <property type="entry name" value="TruA"/>
    <property type="match status" value="1"/>
</dbReference>
<dbReference type="InterPro" id="IPR020103">
    <property type="entry name" value="PsdUridine_synth_cat_dom_sf"/>
</dbReference>
<dbReference type="InterPro" id="IPR001406">
    <property type="entry name" value="PsdUridine_synth_TruA"/>
</dbReference>
<dbReference type="InterPro" id="IPR020097">
    <property type="entry name" value="PsdUridine_synth_TruA_a/b_dom"/>
</dbReference>
<dbReference type="InterPro" id="IPR020095">
    <property type="entry name" value="PsdUridine_synth_TruA_C"/>
</dbReference>
<dbReference type="InterPro" id="IPR020094">
    <property type="entry name" value="TruA/RsuA/RluB/E/F_N"/>
</dbReference>
<dbReference type="NCBIfam" id="TIGR00071">
    <property type="entry name" value="hisT_truA"/>
    <property type="match status" value="1"/>
</dbReference>
<dbReference type="PANTHER" id="PTHR11142">
    <property type="entry name" value="PSEUDOURIDYLATE SYNTHASE"/>
    <property type="match status" value="1"/>
</dbReference>
<dbReference type="PANTHER" id="PTHR11142:SF0">
    <property type="entry name" value="TRNA PSEUDOURIDINE SYNTHASE-LIKE 1"/>
    <property type="match status" value="1"/>
</dbReference>
<dbReference type="Pfam" id="PF01416">
    <property type="entry name" value="PseudoU_synth_1"/>
    <property type="match status" value="2"/>
</dbReference>
<dbReference type="PIRSF" id="PIRSF001430">
    <property type="entry name" value="tRNA_psdUrid_synth"/>
    <property type="match status" value="1"/>
</dbReference>
<dbReference type="SUPFAM" id="SSF55120">
    <property type="entry name" value="Pseudouridine synthase"/>
    <property type="match status" value="1"/>
</dbReference>
<gene>
    <name evidence="1" type="primary">truA</name>
    <name type="ordered locus">Tpet_1218</name>
</gene>